<dbReference type="GO" id="GO:0005576">
    <property type="term" value="C:extracellular region"/>
    <property type="evidence" value="ECO:0000314"/>
    <property type="project" value="UniProtKB"/>
</dbReference>
<dbReference type="GO" id="GO:0007218">
    <property type="term" value="P:neuropeptide signaling pathway"/>
    <property type="evidence" value="ECO:0007669"/>
    <property type="project" value="UniProtKB-KW"/>
</dbReference>
<dbReference type="GO" id="GO:0006937">
    <property type="term" value="P:regulation of muscle contraction"/>
    <property type="evidence" value="ECO:0000314"/>
    <property type="project" value="UniProtKB"/>
</dbReference>
<dbReference type="GO" id="GO:0019953">
    <property type="term" value="P:sexual reproduction"/>
    <property type="evidence" value="ECO:0000270"/>
    <property type="project" value="UniProtKB"/>
</dbReference>
<feature type="peptide" id="PRO_0000273265" description="Ovarian jelly-peptide 1" evidence="1">
    <location>
        <begin position="1"/>
        <end position="7"/>
    </location>
</feature>
<protein>
    <recommendedName>
        <fullName>Ovarian jelly-peptide 1</fullName>
        <shortName>OJP1</shortName>
    </recommendedName>
</protein>
<sequence length="7" mass="814">DQVKIVL</sequence>
<comment type="function">
    <text evidence="1">Has myotropic activity targeting the genital tract.</text>
</comment>
<comment type="subcellular location">
    <subcellularLocation>
        <location evidence="1">Secreted</location>
    </subcellularLocation>
</comment>
<comment type="tissue specificity">
    <text evidence="1">Vitellogenic follicle, fully grown oocyte, egg and internal egg-capsule (at protein level). Not detected in previtellogenic follicles, external egg-capsule, central nervous system and hemolymph.</text>
</comment>
<accession>P85067</accession>
<organism>
    <name type="scientific">Sepia officinalis</name>
    <name type="common">Common cuttlefish</name>
    <dbReference type="NCBI Taxonomy" id="6610"/>
    <lineage>
        <taxon>Eukaryota</taxon>
        <taxon>Metazoa</taxon>
        <taxon>Spiralia</taxon>
        <taxon>Lophotrochozoa</taxon>
        <taxon>Mollusca</taxon>
        <taxon>Cephalopoda</taxon>
        <taxon>Coleoidea</taxon>
        <taxon>Decapodiformes</taxon>
        <taxon>Sepiida</taxon>
        <taxon>Sepiina</taxon>
        <taxon>Sepiidae</taxon>
        <taxon>Sepia</taxon>
    </lineage>
</organism>
<proteinExistence type="evidence at protein level"/>
<evidence type="ECO:0000269" key="1">
    <source>
    </source>
</evidence>
<evidence type="ECO:0000305" key="2"/>
<name>OJP1_SEPOF</name>
<keyword id="KW-0903">Direct protein sequencing</keyword>
<keyword id="KW-0527">Neuropeptide</keyword>
<keyword id="KW-0964">Secreted</keyword>
<reference evidence="2" key="1">
    <citation type="journal article" date="2006" name="Peptides">
        <title>Ovarian jelly-peptides (OJPs), a new family of regulatory peptides identified in the cephalopod Sepia officinalis.</title>
        <authorList>
            <person name="Bernay B."/>
            <person name="Baudy-Floc'h M."/>
            <person name="Gagnon J."/>
            <person name="Henry J."/>
        </authorList>
    </citation>
    <scope>PROTEIN SEQUENCE</scope>
    <scope>FUNCTION</scope>
    <scope>SUBCELLULAR LOCATION</scope>
    <scope>TISSUE SPECIFICITY</scope>
    <source>
        <tissue evidence="1">Oocyte</tissue>
    </source>
</reference>